<proteinExistence type="inferred from homology"/>
<comment type="function">
    <text evidence="1">A type II topoisomerase that negatively supercoils closed circular double-stranded (ds) DNA in an ATP-dependent manner to modulate DNA topology and maintain chromosomes in an underwound state. Negative supercoiling favors strand separation, and DNA replication, transcription, recombination and repair, all of which involve strand separation. Also able to catalyze the interconversion of other topological isomers of dsDNA rings, including catenanes and knotted rings. Type II topoisomerases break and join 2 DNA strands simultaneously in an ATP-dependent manner.</text>
</comment>
<comment type="catalytic activity">
    <reaction evidence="1">
        <text>ATP-dependent breakage, passage and rejoining of double-stranded DNA.</text>
        <dbReference type="EC" id="5.6.2.2"/>
    </reaction>
</comment>
<comment type="cofactor">
    <cofactor evidence="1">
        <name>Mg(2+)</name>
        <dbReference type="ChEBI" id="CHEBI:18420"/>
    </cofactor>
    <cofactor evidence="1">
        <name>Mn(2+)</name>
        <dbReference type="ChEBI" id="CHEBI:29035"/>
    </cofactor>
    <cofactor evidence="1">
        <name>Ca(2+)</name>
        <dbReference type="ChEBI" id="CHEBI:29108"/>
    </cofactor>
    <text evidence="1">Binds two Mg(2+) per subunit. The magnesium ions form salt bridges with both the protein and the DNA. Can also accept other divalent metal cations, such as Mn(2+) or Ca(2+).</text>
</comment>
<comment type="subunit">
    <text evidence="1">Heterotetramer, composed of two GyrA and two GyrB chains. In the heterotetramer, GyrA contains the active site tyrosine that forms a transient covalent intermediate with DNA, while GyrB binds cofactors and catalyzes ATP hydrolysis.</text>
</comment>
<comment type="subcellular location">
    <subcellularLocation>
        <location evidence="1">Cytoplasm</location>
    </subcellularLocation>
</comment>
<comment type="miscellaneous">
    <text evidence="1">Few gyrases are as efficient as E.coli at forming negative supercoils. Not all organisms have 2 type II topoisomerases; in organisms with a single type II topoisomerase this enzyme also has to decatenate newly replicated chromosomes.</text>
</comment>
<comment type="similarity">
    <text evidence="1">Belongs to the type II topoisomerase GyrB family.</text>
</comment>
<evidence type="ECO:0000255" key="1">
    <source>
        <dbReference type="HAMAP-Rule" id="MF_01898"/>
    </source>
</evidence>
<keyword id="KW-0067">ATP-binding</keyword>
<keyword id="KW-0963">Cytoplasm</keyword>
<keyword id="KW-0238">DNA-binding</keyword>
<keyword id="KW-0413">Isomerase</keyword>
<keyword id="KW-0460">Magnesium</keyword>
<keyword id="KW-0479">Metal-binding</keyword>
<keyword id="KW-0547">Nucleotide-binding</keyword>
<keyword id="KW-1185">Reference proteome</keyword>
<keyword id="KW-0799">Topoisomerase</keyword>
<feature type="chain" id="PRO_0000145314" description="DNA gyrase subunit B">
    <location>
        <begin position="1"/>
        <end position="773"/>
    </location>
</feature>
<feature type="domain" description="Toprim" evidence="1">
    <location>
        <begin position="416"/>
        <end position="530"/>
    </location>
</feature>
<feature type="binding site" evidence="1">
    <location>
        <position position="422"/>
    </location>
    <ligand>
        <name>Mg(2+)</name>
        <dbReference type="ChEBI" id="CHEBI:18420"/>
        <label>1</label>
        <note>catalytic</note>
    </ligand>
</feature>
<feature type="binding site" evidence="1">
    <location>
        <position position="495"/>
    </location>
    <ligand>
        <name>Mg(2+)</name>
        <dbReference type="ChEBI" id="CHEBI:18420"/>
        <label>1</label>
        <note>catalytic</note>
    </ligand>
</feature>
<feature type="binding site" evidence="1">
    <location>
        <position position="495"/>
    </location>
    <ligand>
        <name>Mg(2+)</name>
        <dbReference type="ChEBI" id="CHEBI:18420"/>
        <label>2</label>
    </ligand>
</feature>
<feature type="binding site" evidence="1">
    <location>
        <position position="497"/>
    </location>
    <ligand>
        <name>Mg(2+)</name>
        <dbReference type="ChEBI" id="CHEBI:18420"/>
        <label>2</label>
    </ligand>
</feature>
<feature type="site" description="Interaction with DNA" evidence="1">
    <location>
        <position position="447"/>
    </location>
</feature>
<feature type="site" description="Interaction with DNA" evidence="1">
    <location>
        <position position="450"/>
    </location>
</feature>
<organism>
    <name type="scientific">Helicobacter pylori (strain ATCC 700392 / 26695)</name>
    <name type="common">Campylobacter pylori</name>
    <dbReference type="NCBI Taxonomy" id="85962"/>
    <lineage>
        <taxon>Bacteria</taxon>
        <taxon>Pseudomonadati</taxon>
        <taxon>Campylobacterota</taxon>
        <taxon>Epsilonproteobacteria</taxon>
        <taxon>Campylobacterales</taxon>
        <taxon>Helicobacteraceae</taxon>
        <taxon>Helicobacter</taxon>
    </lineage>
</organism>
<accession>P55992</accession>
<reference key="1">
    <citation type="journal article" date="1997" name="Nature">
        <title>The complete genome sequence of the gastric pathogen Helicobacter pylori.</title>
        <authorList>
            <person name="Tomb J.-F."/>
            <person name="White O."/>
            <person name="Kerlavage A.R."/>
            <person name="Clayton R.A."/>
            <person name="Sutton G.G."/>
            <person name="Fleischmann R.D."/>
            <person name="Ketchum K.A."/>
            <person name="Klenk H.-P."/>
            <person name="Gill S.R."/>
            <person name="Dougherty B.A."/>
            <person name="Nelson K.E."/>
            <person name="Quackenbush J."/>
            <person name="Zhou L."/>
            <person name="Kirkness E.F."/>
            <person name="Peterson S.N."/>
            <person name="Loftus B.J."/>
            <person name="Richardson D.L."/>
            <person name="Dodson R.J."/>
            <person name="Khalak H.G."/>
            <person name="Glodek A."/>
            <person name="McKenney K."/>
            <person name="FitzGerald L.M."/>
            <person name="Lee N."/>
            <person name="Adams M.D."/>
            <person name="Hickey E.K."/>
            <person name="Berg D.E."/>
            <person name="Gocayne J.D."/>
            <person name="Utterback T.R."/>
            <person name="Peterson J.D."/>
            <person name="Kelley J.M."/>
            <person name="Cotton M.D."/>
            <person name="Weidman J.F."/>
            <person name="Fujii C."/>
            <person name="Bowman C."/>
            <person name="Watthey L."/>
            <person name="Wallin E."/>
            <person name="Hayes W.S."/>
            <person name="Borodovsky M."/>
            <person name="Karp P.D."/>
            <person name="Smith H.O."/>
            <person name="Fraser C.M."/>
            <person name="Venter J.C."/>
        </authorList>
    </citation>
    <scope>NUCLEOTIDE SEQUENCE [LARGE SCALE GENOMIC DNA]</scope>
    <source>
        <strain>ATCC 700392 / 26695</strain>
    </source>
</reference>
<name>GYRB_HELPY</name>
<sequence length="773" mass="87367">MQNYQSHSIKVLKGLEGVRKRPGMYIGDTNVGGLHHMVYEVVDNAVDESMAGFCDTINITLTDEGSCIVEDNGRGIPVDIHPTEKIPACTVVLTILHAGGKFDNDTYKVSGGLHGVGVSVVNALSKRLIMTIKKEGQIYRQEFEKGIPTSELEIIGKTKSAKESGTTIEFFPDESVMEVVEFQAGILQKRFKEMAYLNDGLKISFKEEKTQLQETYFYEDGLKQFVKDSAKKELLTPIISFKSMDEETRTSIEVALAYADDYNENTLSFVNNIKTSEGGTHEAGFKMGLSKAILQYIGNNIKTKESRPISEDIKEGLIAVVSLKMSEPLFEGQTKSKLGSSYARALVSKLVYDKIHQFLEENPNEAKIIANKALLAAKAREASKKARELTRKKDNLSVGTLPGKLADCQSKDPLESEIFLVEGDSAGGSAKQGRDRVFQAILPLKGKILNVEKSHLSKILKSEEIKNMITAFGCGIQESFDIERLRYHKIIIMTDADVDGSHIQTLLMTFFYRYLRPLIEQGHVYIAQAPLYKYKKGKTEIYLKDSVALDHFLIEHGINSVDIEGIGKNDLMNLLKVARHYRYALLELEKRYNLLEILRFLIETKDALSLDMKVLEKSILEKLEGLNYQILRSFATEESLHLHTQTPKGLVEFNLDDNLFKEVLFEEANYTYQKLMEYNLDFLENKDILAFLEEVENHAKKGANIQRYKGLGEMNPNDLWETTMHKENRSLIKLKIEDLEKTDAVFSLCMGDEVEPRRAFIQAHAKDVKQLDV</sequence>
<gene>
    <name evidence="1" type="primary">gyrB</name>
    <name type="ordered locus">HP_0501</name>
</gene>
<dbReference type="EC" id="5.6.2.2" evidence="1"/>
<dbReference type="EMBL" id="AE000511">
    <property type="protein sequence ID" value="AAD07566.1"/>
    <property type="molecule type" value="Genomic_DNA"/>
</dbReference>
<dbReference type="PIR" id="E64582">
    <property type="entry name" value="E64582"/>
</dbReference>
<dbReference type="RefSeq" id="NP_207298.1">
    <property type="nucleotide sequence ID" value="NC_000915.1"/>
</dbReference>
<dbReference type="RefSeq" id="WP_001182024.1">
    <property type="nucleotide sequence ID" value="NC_018939.1"/>
</dbReference>
<dbReference type="SMR" id="P55992"/>
<dbReference type="DIP" id="DIP-3593N"/>
<dbReference type="FunCoup" id="P55992">
    <property type="interactions" value="331"/>
</dbReference>
<dbReference type="IntAct" id="P55992">
    <property type="interactions" value="4"/>
</dbReference>
<dbReference type="MINT" id="P55992"/>
<dbReference type="STRING" id="85962.HP_0501"/>
<dbReference type="PaxDb" id="85962-C694_02575"/>
<dbReference type="EnsemblBacteria" id="AAD07566">
    <property type="protein sequence ID" value="AAD07566"/>
    <property type="gene ID" value="HP_0501"/>
</dbReference>
<dbReference type="KEGG" id="heo:C694_02575"/>
<dbReference type="KEGG" id="hpy:HP_0501"/>
<dbReference type="PATRIC" id="fig|85962.47.peg.539"/>
<dbReference type="eggNOG" id="COG0187">
    <property type="taxonomic scope" value="Bacteria"/>
</dbReference>
<dbReference type="InParanoid" id="P55992"/>
<dbReference type="OrthoDB" id="9802808at2"/>
<dbReference type="PhylomeDB" id="P55992"/>
<dbReference type="Proteomes" id="UP000000429">
    <property type="component" value="Chromosome"/>
</dbReference>
<dbReference type="GO" id="GO:0005694">
    <property type="term" value="C:chromosome"/>
    <property type="evidence" value="ECO:0007669"/>
    <property type="project" value="InterPro"/>
</dbReference>
<dbReference type="GO" id="GO:0005737">
    <property type="term" value="C:cytoplasm"/>
    <property type="evidence" value="ECO:0007669"/>
    <property type="project" value="UniProtKB-SubCell"/>
</dbReference>
<dbReference type="GO" id="GO:0005524">
    <property type="term" value="F:ATP binding"/>
    <property type="evidence" value="ECO:0007669"/>
    <property type="project" value="UniProtKB-UniRule"/>
</dbReference>
<dbReference type="GO" id="GO:0003677">
    <property type="term" value="F:DNA binding"/>
    <property type="evidence" value="ECO:0007669"/>
    <property type="project" value="UniProtKB-KW"/>
</dbReference>
<dbReference type="GO" id="GO:0003918">
    <property type="term" value="F:DNA topoisomerase type II (double strand cut, ATP-hydrolyzing) activity"/>
    <property type="evidence" value="ECO:0000318"/>
    <property type="project" value="GO_Central"/>
</dbReference>
<dbReference type="GO" id="GO:0046872">
    <property type="term" value="F:metal ion binding"/>
    <property type="evidence" value="ECO:0007669"/>
    <property type="project" value="UniProtKB-KW"/>
</dbReference>
<dbReference type="GO" id="GO:0006265">
    <property type="term" value="P:DNA topological change"/>
    <property type="evidence" value="ECO:0000318"/>
    <property type="project" value="GO_Central"/>
</dbReference>
<dbReference type="GO" id="GO:0006261">
    <property type="term" value="P:DNA-templated DNA replication"/>
    <property type="evidence" value="ECO:0007669"/>
    <property type="project" value="UniProtKB-UniRule"/>
</dbReference>
<dbReference type="CDD" id="cd16928">
    <property type="entry name" value="HATPase_GyrB-like"/>
    <property type="match status" value="1"/>
</dbReference>
<dbReference type="CDD" id="cd00822">
    <property type="entry name" value="TopoII_Trans_DNA_gyrase"/>
    <property type="match status" value="1"/>
</dbReference>
<dbReference type="CDD" id="cd03366">
    <property type="entry name" value="TOPRIM_TopoIIA_GyrB"/>
    <property type="match status" value="1"/>
</dbReference>
<dbReference type="FunFam" id="3.30.565.10:FF:000002">
    <property type="entry name" value="DNA gyrase subunit B"/>
    <property type="match status" value="1"/>
</dbReference>
<dbReference type="FunFam" id="3.40.50.670:FF:000012">
    <property type="entry name" value="DNA gyrase subunit B"/>
    <property type="match status" value="1"/>
</dbReference>
<dbReference type="FunFam" id="3.40.50.670:FF:000013">
    <property type="entry name" value="DNA gyrase subunit B"/>
    <property type="match status" value="1"/>
</dbReference>
<dbReference type="Gene3D" id="3.30.230.10">
    <property type="match status" value="1"/>
</dbReference>
<dbReference type="Gene3D" id="3.40.50.670">
    <property type="match status" value="2"/>
</dbReference>
<dbReference type="Gene3D" id="3.30.565.10">
    <property type="entry name" value="Histidine kinase-like ATPase, C-terminal domain"/>
    <property type="match status" value="1"/>
</dbReference>
<dbReference type="HAMAP" id="MF_01898">
    <property type="entry name" value="GyrB"/>
    <property type="match status" value="1"/>
</dbReference>
<dbReference type="InterPro" id="IPR002288">
    <property type="entry name" value="DNA_gyrase_B_C"/>
</dbReference>
<dbReference type="InterPro" id="IPR011557">
    <property type="entry name" value="GyrB"/>
</dbReference>
<dbReference type="InterPro" id="IPR036890">
    <property type="entry name" value="HATPase_C_sf"/>
</dbReference>
<dbReference type="InterPro" id="IPR020568">
    <property type="entry name" value="Ribosomal_Su5_D2-typ_SF"/>
</dbReference>
<dbReference type="InterPro" id="IPR014721">
    <property type="entry name" value="Ribsml_uS5_D2-typ_fold_subgr"/>
</dbReference>
<dbReference type="InterPro" id="IPR001241">
    <property type="entry name" value="Topo_IIA"/>
</dbReference>
<dbReference type="InterPro" id="IPR013760">
    <property type="entry name" value="Topo_IIA-like_dom_sf"/>
</dbReference>
<dbReference type="InterPro" id="IPR000565">
    <property type="entry name" value="Topo_IIA_B"/>
</dbReference>
<dbReference type="InterPro" id="IPR013759">
    <property type="entry name" value="Topo_IIA_B_C"/>
</dbReference>
<dbReference type="InterPro" id="IPR013506">
    <property type="entry name" value="Topo_IIA_bsu_dom2"/>
</dbReference>
<dbReference type="InterPro" id="IPR018522">
    <property type="entry name" value="TopoIIA_CS"/>
</dbReference>
<dbReference type="InterPro" id="IPR006171">
    <property type="entry name" value="TOPRIM_dom"/>
</dbReference>
<dbReference type="InterPro" id="IPR034160">
    <property type="entry name" value="TOPRIM_GyrB"/>
</dbReference>
<dbReference type="NCBIfam" id="TIGR01059">
    <property type="entry name" value="gyrB"/>
    <property type="match status" value="1"/>
</dbReference>
<dbReference type="NCBIfam" id="NF004189">
    <property type="entry name" value="PRK05644.1"/>
    <property type="match status" value="1"/>
</dbReference>
<dbReference type="NCBIfam" id="NF011501">
    <property type="entry name" value="PRK14939.1"/>
    <property type="match status" value="1"/>
</dbReference>
<dbReference type="PANTHER" id="PTHR45866:SF1">
    <property type="entry name" value="DNA GYRASE SUBUNIT B, MITOCHONDRIAL"/>
    <property type="match status" value="1"/>
</dbReference>
<dbReference type="PANTHER" id="PTHR45866">
    <property type="entry name" value="DNA GYRASE/TOPOISOMERASE SUBUNIT B"/>
    <property type="match status" value="1"/>
</dbReference>
<dbReference type="Pfam" id="PF00204">
    <property type="entry name" value="DNA_gyraseB"/>
    <property type="match status" value="1"/>
</dbReference>
<dbReference type="Pfam" id="PF00986">
    <property type="entry name" value="DNA_gyraseB_C"/>
    <property type="match status" value="1"/>
</dbReference>
<dbReference type="Pfam" id="PF02518">
    <property type="entry name" value="HATPase_c"/>
    <property type="match status" value="1"/>
</dbReference>
<dbReference type="Pfam" id="PF01751">
    <property type="entry name" value="Toprim"/>
    <property type="match status" value="1"/>
</dbReference>
<dbReference type="PRINTS" id="PR01159">
    <property type="entry name" value="DNAGYRASEB"/>
</dbReference>
<dbReference type="PRINTS" id="PR00418">
    <property type="entry name" value="TPI2FAMILY"/>
</dbReference>
<dbReference type="SMART" id="SM00387">
    <property type="entry name" value="HATPase_c"/>
    <property type="match status" value="1"/>
</dbReference>
<dbReference type="SMART" id="SM00433">
    <property type="entry name" value="TOP2c"/>
    <property type="match status" value="1"/>
</dbReference>
<dbReference type="SUPFAM" id="SSF55874">
    <property type="entry name" value="ATPase domain of HSP90 chaperone/DNA topoisomerase II/histidine kinase"/>
    <property type="match status" value="1"/>
</dbReference>
<dbReference type="SUPFAM" id="SSF54211">
    <property type="entry name" value="Ribosomal protein S5 domain 2-like"/>
    <property type="match status" value="1"/>
</dbReference>
<dbReference type="SUPFAM" id="SSF56719">
    <property type="entry name" value="Type II DNA topoisomerase"/>
    <property type="match status" value="1"/>
</dbReference>
<dbReference type="PROSITE" id="PS00177">
    <property type="entry name" value="TOPOISOMERASE_II"/>
    <property type="match status" value="1"/>
</dbReference>
<dbReference type="PROSITE" id="PS50880">
    <property type="entry name" value="TOPRIM"/>
    <property type="match status" value="1"/>
</dbReference>
<protein>
    <recommendedName>
        <fullName evidence="1">DNA gyrase subunit B</fullName>
        <ecNumber evidence="1">5.6.2.2</ecNumber>
    </recommendedName>
</protein>